<evidence type="ECO:0000250" key="1">
    <source>
        <dbReference type="UniProtKB" id="Q9Y2B1"/>
    </source>
</evidence>
<evidence type="ECO:0000255" key="2"/>
<evidence type="ECO:0000269" key="3">
    <source>
    </source>
</evidence>
<evidence type="ECO:0000303" key="4">
    <source>
    </source>
</evidence>
<evidence type="ECO:0000305" key="5"/>
<keyword id="KW-0333">Golgi apparatus</keyword>
<keyword id="KW-0472">Membrane</keyword>
<keyword id="KW-1185">Reference proteome</keyword>
<keyword id="KW-0735">Signal-anchor</keyword>
<keyword id="KW-0808">Transferase</keyword>
<keyword id="KW-0812">Transmembrane</keyword>
<keyword id="KW-1133">Transmembrane helix</keyword>
<reference key="1">
    <citation type="journal article" date="2013" name="Nature">
        <title>The zebrafish reference genome sequence and its relationship to the human genome.</title>
        <authorList>
            <person name="Howe K."/>
            <person name="Clark M.D."/>
            <person name="Torroja C.F."/>
            <person name="Torrance J."/>
            <person name="Berthelot C."/>
            <person name="Muffato M."/>
            <person name="Collins J.E."/>
            <person name="Humphray S."/>
            <person name="McLaren K."/>
            <person name="Matthews L."/>
            <person name="McLaren S."/>
            <person name="Sealy I."/>
            <person name="Caccamo M."/>
            <person name="Churcher C."/>
            <person name="Scott C."/>
            <person name="Barrett J.C."/>
            <person name="Koch R."/>
            <person name="Rauch G.J."/>
            <person name="White S."/>
            <person name="Chow W."/>
            <person name="Kilian B."/>
            <person name="Quintais L.T."/>
            <person name="Guerra-Assuncao J.A."/>
            <person name="Zhou Y."/>
            <person name="Gu Y."/>
            <person name="Yen J."/>
            <person name="Vogel J.H."/>
            <person name="Eyre T."/>
            <person name="Redmond S."/>
            <person name="Banerjee R."/>
            <person name="Chi J."/>
            <person name="Fu B."/>
            <person name="Langley E."/>
            <person name="Maguire S.F."/>
            <person name="Laird G.K."/>
            <person name="Lloyd D."/>
            <person name="Kenyon E."/>
            <person name="Donaldson S."/>
            <person name="Sehra H."/>
            <person name="Almeida-King J."/>
            <person name="Loveland J."/>
            <person name="Trevanion S."/>
            <person name="Jones M."/>
            <person name="Quail M."/>
            <person name="Willey D."/>
            <person name="Hunt A."/>
            <person name="Burton J."/>
            <person name="Sims S."/>
            <person name="McLay K."/>
            <person name="Plumb B."/>
            <person name="Davis J."/>
            <person name="Clee C."/>
            <person name="Oliver K."/>
            <person name="Clark R."/>
            <person name="Riddle C."/>
            <person name="Elliot D."/>
            <person name="Threadgold G."/>
            <person name="Harden G."/>
            <person name="Ware D."/>
            <person name="Begum S."/>
            <person name="Mortimore B."/>
            <person name="Kerry G."/>
            <person name="Heath P."/>
            <person name="Phillimore B."/>
            <person name="Tracey A."/>
            <person name="Corby N."/>
            <person name="Dunn M."/>
            <person name="Johnson C."/>
            <person name="Wood J."/>
            <person name="Clark S."/>
            <person name="Pelan S."/>
            <person name="Griffiths G."/>
            <person name="Smith M."/>
            <person name="Glithero R."/>
            <person name="Howden P."/>
            <person name="Barker N."/>
            <person name="Lloyd C."/>
            <person name="Stevens C."/>
            <person name="Harley J."/>
            <person name="Holt K."/>
            <person name="Panagiotidis G."/>
            <person name="Lovell J."/>
            <person name="Beasley H."/>
            <person name="Henderson C."/>
            <person name="Gordon D."/>
            <person name="Auger K."/>
            <person name="Wright D."/>
            <person name="Collins J."/>
            <person name="Raisen C."/>
            <person name="Dyer L."/>
            <person name="Leung K."/>
            <person name="Robertson L."/>
            <person name="Ambridge K."/>
            <person name="Leongamornlert D."/>
            <person name="McGuire S."/>
            <person name="Gilderthorp R."/>
            <person name="Griffiths C."/>
            <person name="Manthravadi D."/>
            <person name="Nichol S."/>
            <person name="Barker G."/>
            <person name="Whitehead S."/>
            <person name="Kay M."/>
            <person name="Brown J."/>
            <person name="Murnane C."/>
            <person name="Gray E."/>
            <person name="Humphries M."/>
            <person name="Sycamore N."/>
            <person name="Barker D."/>
            <person name="Saunders D."/>
            <person name="Wallis J."/>
            <person name="Babbage A."/>
            <person name="Hammond S."/>
            <person name="Mashreghi-Mohammadi M."/>
            <person name="Barr L."/>
            <person name="Martin S."/>
            <person name="Wray P."/>
            <person name="Ellington A."/>
            <person name="Matthews N."/>
            <person name="Ellwood M."/>
            <person name="Woodmansey R."/>
            <person name="Clark G."/>
            <person name="Cooper J."/>
            <person name="Tromans A."/>
            <person name="Grafham D."/>
            <person name="Skuce C."/>
            <person name="Pandian R."/>
            <person name="Andrews R."/>
            <person name="Harrison E."/>
            <person name="Kimberley A."/>
            <person name="Garnett J."/>
            <person name="Fosker N."/>
            <person name="Hall R."/>
            <person name="Garner P."/>
            <person name="Kelly D."/>
            <person name="Bird C."/>
            <person name="Palmer S."/>
            <person name="Gehring I."/>
            <person name="Berger A."/>
            <person name="Dooley C.M."/>
            <person name="Ersan-Urun Z."/>
            <person name="Eser C."/>
            <person name="Geiger H."/>
            <person name="Geisler M."/>
            <person name="Karotki L."/>
            <person name="Kirn A."/>
            <person name="Konantz J."/>
            <person name="Konantz M."/>
            <person name="Oberlander M."/>
            <person name="Rudolph-Geiger S."/>
            <person name="Teucke M."/>
            <person name="Lanz C."/>
            <person name="Raddatz G."/>
            <person name="Osoegawa K."/>
            <person name="Zhu B."/>
            <person name="Rapp A."/>
            <person name="Widaa S."/>
            <person name="Langford C."/>
            <person name="Yang F."/>
            <person name="Schuster S.C."/>
            <person name="Carter N.P."/>
            <person name="Harrow J."/>
            <person name="Ning Z."/>
            <person name="Herrero J."/>
            <person name="Searle S.M."/>
            <person name="Enright A."/>
            <person name="Geisler R."/>
            <person name="Plasterk R.H."/>
            <person name="Lee C."/>
            <person name="Westerfield M."/>
            <person name="de Jong P.J."/>
            <person name="Zon L.I."/>
            <person name="Postlethwait J.H."/>
            <person name="Nusslein-Volhard C."/>
            <person name="Hubbard T.J."/>
            <person name="Roest Crollius H."/>
            <person name="Rogers J."/>
            <person name="Stemple D.L."/>
        </authorList>
    </citation>
    <scope>NUCLEOTIDE SEQUENCE [LARGE SCALE GENOMIC DNA]</scope>
    <source>
        <strain>Tuebingen</strain>
    </source>
</reference>
<reference key="2">
    <citation type="submission" date="2006-09" db="EMBL/GenBank/DDBJ databases">
        <authorList>
            <consortium name="NIH - Zebrafish Gene Collection (ZGC) project"/>
        </authorList>
    </citation>
    <scope>NUCLEOTIDE SEQUENCE [LARGE SCALE MRNA]</scope>
    <source>
        <tissue>Embryo</tissue>
    </source>
</reference>
<reference key="3">
    <citation type="journal article" date="2016" name="Elife">
        <title>The functional O-mannose glycan on alpha-dystroglycan contains a phospho-ribitol primed for matriglycan addition.</title>
        <authorList>
            <person name="Praissman J.L."/>
            <person name="Willer T."/>
            <person name="Sheikh M.O."/>
            <person name="Toi A."/>
            <person name="Chitayat D."/>
            <person name="Lin Y.Y."/>
            <person name="Lee H."/>
            <person name="Stalnaker S.H."/>
            <person name="Wang S."/>
            <person name="Prabhakar P.K."/>
            <person name="Nelson S.F."/>
            <person name="Stemple D.L."/>
            <person name="Moore S.A."/>
            <person name="Moremen K.W."/>
            <person name="Campbell K.P."/>
            <person name="Wells L."/>
        </authorList>
    </citation>
    <scope>DEVELOPMENTAL STAGE</scope>
    <scope>DISRUPTION PHENOTYPE</scope>
    <scope>FUNCTION</scope>
</reference>
<proteinExistence type="evidence at transcript level"/>
<name>RXLT1_DANRE</name>
<protein>
    <recommendedName>
        <fullName evidence="1">Ribitol-5-phosphate xylosyltransferase 1</fullName>
        <ecNumber evidence="1">2.4.2.61</ecNumber>
    </recommendedName>
    <alternativeName>
        <fullName evidence="1">Transmembrane protein 5</fullName>
    </alternativeName>
    <alternativeName>
        <fullName evidence="1">UDP-D-xylose:ribitol-5-phosphate beta1,4-xylosyltransferase</fullName>
    </alternativeName>
</protein>
<comment type="function">
    <text evidence="1 3">Acts as a UDP-D-xylose:ribitol-5-phosphate beta1,4-xylosyltransferase, which catalyzes the transfer of UDP-D-xylose to ribitol 5-phosphate (Rbo5P) to form the Xylbeta1-4Rbo5P linkage on O-mannosyl glycan (By similarity). Participates in the biosynthesis of the phosphorylated O-mannosyl trisaccharide (N-acetylgalactosamine-beta-3-N-acetylglucosamine-beta-4-(phosphate-6-)mannose), a carbohydrate structure present in alpha-dystroglycan (DAG1), which is required for binding laminin G-like domain-containing extracellular proteins with high affinity (PubMed:27130732).</text>
</comment>
<comment type="catalytic activity">
    <reaction evidence="1">
        <text>3-O-[Rib-ol-P-Rib-ol-P-3-beta-D-GalNAc-(1-&gt;3)-beta-D-GlcNAc-(1-&gt;4)-(O-6-P-alpha-D-Man)]-Thr-[protein] + UDP-alpha-D-xylose = 3-O-[beta-D-Xyl-(1-&gt;4)-Rib-ol-P-Rib-ol-P-3-beta-D-GalNAc-(1-&gt;3)-beta-D-GlcNAc-(1-&gt;4)-(O-6-P-alpha-D-Man)]-Thr-[protein] + UDP + H(+)</text>
        <dbReference type="Rhea" id="RHEA:57880"/>
        <dbReference type="Rhea" id="RHEA-COMP:15021"/>
        <dbReference type="Rhea" id="RHEA-COMP:15023"/>
        <dbReference type="ChEBI" id="CHEBI:15378"/>
        <dbReference type="ChEBI" id="CHEBI:57632"/>
        <dbReference type="ChEBI" id="CHEBI:58223"/>
        <dbReference type="ChEBI" id="CHEBI:142403"/>
        <dbReference type="ChEBI" id="CHEBI:142405"/>
        <dbReference type="EC" id="2.4.2.61"/>
    </reaction>
    <physiologicalReaction direction="left-to-right" evidence="1">
        <dbReference type="Rhea" id="RHEA:57881"/>
    </physiologicalReaction>
</comment>
<comment type="pathway">
    <text evidence="1">Protein modification; protein glycosylation.</text>
</comment>
<comment type="subcellular location">
    <subcellularLocation>
        <location evidence="1">Golgi apparatus membrane</location>
        <topology evidence="1">Single-pass type II membrane protein</topology>
    </subcellularLocation>
</comment>
<comment type="developmental stage">
    <text evidence="3">Expressed throughout early embryonic development.</text>
</comment>
<comment type="disruption phenotype">
    <text evidence="3">Embryos display mild to severe hydrocephalus and significantly reduced eye size, reminiscent of pathological defects in Walker-Warburg syndrome.</text>
</comment>
<comment type="similarity">
    <text evidence="5">Belongs to the TMEM5 family.</text>
</comment>
<organism>
    <name type="scientific">Danio rerio</name>
    <name type="common">Zebrafish</name>
    <name type="synonym">Brachydanio rerio</name>
    <dbReference type="NCBI Taxonomy" id="7955"/>
    <lineage>
        <taxon>Eukaryota</taxon>
        <taxon>Metazoa</taxon>
        <taxon>Chordata</taxon>
        <taxon>Craniata</taxon>
        <taxon>Vertebrata</taxon>
        <taxon>Euteleostomi</taxon>
        <taxon>Actinopterygii</taxon>
        <taxon>Neopterygii</taxon>
        <taxon>Teleostei</taxon>
        <taxon>Ostariophysi</taxon>
        <taxon>Cypriniformes</taxon>
        <taxon>Danionidae</taxon>
        <taxon>Danioninae</taxon>
        <taxon>Danio</taxon>
    </lineage>
</organism>
<feature type="chain" id="PRO_0000360147" description="Ribitol-5-phosphate xylosyltransferase 1">
    <location>
        <begin position="1"/>
        <end position="434"/>
    </location>
</feature>
<feature type="topological domain" description="Cytoplasmic" evidence="2">
    <location>
        <begin position="1"/>
        <end position="7"/>
    </location>
</feature>
<feature type="transmembrane region" description="Helical; Signal-anchor for type II membrane protein" evidence="2">
    <location>
        <begin position="8"/>
        <end position="28"/>
    </location>
</feature>
<feature type="topological domain" description="Extracellular" evidence="2">
    <location>
        <begin position="29"/>
        <end position="434"/>
    </location>
</feature>
<feature type="sequence conflict" description="In Ref. 2; AAI24286." ref="2">
    <original>V</original>
    <variation>M</variation>
    <location>
        <position position="40"/>
    </location>
</feature>
<feature type="sequence conflict" description="In Ref. 2; AAI24286." ref="2">
    <original>L</original>
    <variation>P</variation>
    <location>
        <position position="211"/>
    </location>
</feature>
<feature type="sequence conflict" description="In Ref. 2; AAI24286." ref="2">
    <original>V</original>
    <variation>I</variation>
    <location>
        <position position="230"/>
    </location>
</feature>
<feature type="sequence conflict" description="In Ref. 2; AAI24286." ref="2">
    <original>S</original>
    <variation>T</variation>
    <location>
        <position position="280"/>
    </location>
</feature>
<accession>Q08CD5</accession>
<accession>F1RDU5</accession>
<dbReference type="EC" id="2.4.2.61" evidence="1"/>
<dbReference type="EMBL" id="CABZ01034123">
    <property type="status" value="NOT_ANNOTATED_CDS"/>
    <property type="molecule type" value="Genomic_DNA"/>
</dbReference>
<dbReference type="EMBL" id="CABZ01034124">
    <property type="status" value="NOT_ANNOTATED_CDS"/>
    <property type="molecule type" value="Genomic_DNA"/>
</dbReference>
<dbReference type="EMBL" id="CABZ01034125">
    <property type="status" value="NOT_ANNOTATED_CDS"/>
    <property type="molecule type" value="Genomic_DNA"/>
</dbReference>
<dbReference type="EMBL" id="CABZ01034126">
    <property type="status" value="NOT_ANNOTATED_CDS"/>
    <property type="molecule type" value="Genomic_DNA"/>
</dbReference>
<dbReference type="EMBL" id="CABZ01034127">
    <property type="status" value="NOT_ANNOTATED_CDS"/>
    <property type="molecule type" value="Genomic_DNA"/>
</dbReference>
<dbReference type="EMBL" id="CABZ01034128">
    <property type="status" value="NOT_ANNOTATED_CDS"/>
    <property type="molecule type" value="Genomic_DNA"/>
</dbReference>
<dbReference type="EMBL" id="CABZ01034129">
    <property type="status" value="NOT_ANNOTATED_CDS"/>
    <property type="molecule type" value="Genomic_DNA"/>
</dbReference>
<dbReference type="EMBL" id="CABZ01034130">
    <property type="status" value="NOT_ANNOTATED_CDS"/>
    <property type="molecule type" value="Genomic_DNA"/>
</dbReference>
<dbReference type="EMBL" id="CABZ01070849">
    <property type="status" value="NOT_ANNOTATED_CDS"/>
    <property type="molecule type" value="Genomic_DNA"/>
</dbReference>
<dbReference type="EMBL" id="CABZ01081731">
    <property type="status" value="NOT_ANNOTATED_CDS"/>
    <property type="molecule type" value="Genomic_DNA"/>
</dbReference>
<dbReference type="EMBL" id="BC124285">
    <property type="protein sequence ID" value="AAI24286.1"/>
    <property type="molecule type" value="mRNA"/>
</dbReference>
<dbReference type="RefSeq" id="NP_001068580.1">
    <property type="nucleotide sequence ID" value="NM_001075112.1"/>
</dbReference>
<dbReference type="FunCoup" id="Q08CD5">
    <property type="interactions" value="875"/>
</dbReference>
<dbReference type="STRING" id="7955.ENSDARP00000087080"/>
<dbReference type="PaxDb" id="7955-ENSDARP00000087080"/>
<dbReference type="Ensembl" id="ENSDART00000092648">
    <property type="protein sequence ID" value="ENSDARP00000087080"/>
    <property type="gene ID" value="ENSDARG00000063414"/>
</dbReference>
<dbReference type="GeneID" id="557187"/>
<dbReference type="KEGG" id="dre:557187"/>
<dbReference type="AGR" id="ZFIN:ZDB-GENE-060929-1018"/>
<dbReference type="CTD" id="10329"/>
<dbReference type="ZFIN" id="ZDB-GENE-060929-1018">
    <property type="gene designation" value="rxylt1"/>
</dbReference>
<dbReference type="eggNOG" id="ENOG502QT2E">
    <property type="taxonomic scope" value="Eukaryota"/>
</dbReference>
<dbReference type="InParanoid" id="Q08CD5"/>
<dbReference type="OMA" id="RIFQWPL"/>
<dbReference type="OrthoDB" id="8560686at2759"/>
<dbReference type="PhylomeDB" id="Q08CD5"/>
<dbReference type="TreeFam" id="TF328717"/>
<dbReference type="UniPathway" id="UPA00378"/>
<dbReference type="PRO" id="PR:Q08CD5"/>
<dbReference type="Proteomes" id="UP000000437">
    <property type="component" value="Alternate scaffold 18"/>
</dbReference>
<dbReference type="Proteomes" id="UP000000437">
    <property type="component" value="Chromosome 18"/>
</dbReference>
<dbReference type="Bgee" id="ENSDARG00000063414">
    <property type="expression patterns" value="Expressed in early embryo and 21 other cell types or tissues"/>
</dbReference>
<dbReference type="GO" id="GO:0005794">
    <property type="term" value="C:Golgi apparatus"/>
    <property type="evidence" value="ECO:0000250"/>
    <property type="project" value="UniProtKB"/>
</dbReference>
<dbReference type="GO" id="GO:0000139">
    <property type="term" value="C:Golgi membrane"/>
    <property type="evidence" value="ECO:0007669"/>
    <property type="project" value="UniProtKB-SubCell"/>
</dbReference>
<dbReference type="GO" id="GO:0120053">
    <property type="term" value="F:ribitol beta-1,4-xylosyltransferase activity"/>
    <property type="evidence" value="ECO:0000250"/>
    <property type="project" value="UniProtKB"/>
</dbReference>
<dbReference type="GO" id="GO:0035269">
    <property type="term" value="P:protein O-linked mannosylation"/>
    <property type="evidence" value="ECO:0000250"/>
    <property type="project" value="UniProtKB"/>
</dbReference>
<dbReference type="CDD" id="cd21099">
    <property type="entry name" value="RXYLT1-like"/>
    <property type="match status" value="1"/>
</dbReference>
<dbReference type="InterPro" id="IPR055286">
    <property type="entry name" value="RXYLT1-like"/>
</dbReference>
<dbReference type="PANTHER" id="PTHR15576">
    <property type="entry name" value="RIBITOL-5-PHOSPHATE XYLOSYLTRANSFERASE 1"/>
    <property type="match status" value="1"/>
</dbReference>
<dbReference type="PANTHER" id="PTHR15576:SF1">
    <property type="entry name" value="RIBITOL-5-PHOSPHATE XYLOSYLTRANSFERASE 1"/>
    <property type="match status" value="1"/>
</dbReference>
<dbReference type="Pfam" id="PF24785">
    <property type="entry name" value="RXYLT1_C"/>
    <property type="match status" value="1"/>
</dbReference>
<dbReference type="Pfam" id="PF24786">
    <property type="entry name" value="RXYLT1_N"/>
    <property type="match status" value="1"/>
</dbReference>
<sequence length="434" mass="50383">MRFFRRKIAIIVILAYAIFSLYAAYNVFFSKRVISRVHRVVKKGSVIIETGKAGEKEWNPWEEDERAHSVVVQKRRDAFRLYRDQAAKNRPKTYKVQIWGKAAIGLYLWEHILEGSLNPSDKSSQWREGEIQSGKIHFSFYTGPAVVQGHVPPDTDSVVLVLNGREQQKISYSVQWLQHVQSLIQARTISRVAVVLLGNEQCNNNWISPYLKRNGGFVDLLFLVYDSPWVNDKDIFQWPLGVATYRHFPVVTLSSQMVKKDRPYLCNFLGTIYKNSSRESLMNLLKQNNMEKDCLMHAREKWLPQETSDTSRQYQMALAQSDLTLCPVGVNSECYRIYEACAYGSVPVVEDVLTPGACAVGNRSPLRLLKDAGAPFIFLKDWKELPVILERERAMSQKEKTERRMRLLEWYSSFRQQMKDRFTEVLEENFFKIT</sequence>
<gene>
    <name type="primary">rxylt1</name>
    <name type="synonym">tmem5</name>
    <name evidence="4" type="ORF">zgc:153239</name>
</gene>